<proteinExistence type="uncertain"/>
<reference key="1">
    <citation type="journal article" date="1993" name="Curr. Genet.">
        <title>A large deletion in the plastid DNA of the holoparasitic flowering plant Cuscuta reflexa concerning two ribosomal proteins (rpl2, rpl23), one transfer RNA (trnI) and an ORF 2280 homologue.</title>
        <authorList>
            <person name="Boemmer D."/>
            <person name="Haberhausen G."/>
            <person name="Zetsche K."/>
        </authorList>
    </citation>
    <scope>NUCLEOTIDE SEQUENCE [GENOMIC DNA]</scope>
</reference>
<reference key="2">
    <citation type="journal article" date="2007" name="BMC Plant Biol.">
        <title>Complete DNA sequences of the plastid genomes of two parasitic flowering plant species, Cuscuta reflexa and Cuscuta gronovii.</title>
        <authorList>
            <person name="Funk H.T."/>
            <person name="Berg S."/>
            <person name="Krupinska K."/>
            <person name="Maier U.-G."/>
            <person name="Krause K."/>
        </authorList>
    </citation>
    <scope>NUCLEOTIDE SEQUENCE [LARGE SCALE GENOMIC DNA]</scope>
</reference>
<name>YCF15_CUSRE</name>
<sequence>MYGWYELPKQEFLNSKQPVHIFTTKKYWILFRIGPERRRKAGMPKASIISFTRPNPVWERPVPKSLTGLFNVLYLLG</sequence>
<comment type="subcellular location">
    <subcellularLocation>
        <location>Plastid</location>
    </subcellularLocation>
</comment>
<comment type="similarity">
    <text evidence="1">Belongs to the ycf15 family.</text>
</comment>
<comment type="caution">
    <text evidence="1">Could be the product of a pseudogene.</text>
</comment>
<comment type="caution">
    <text evidence="1">Young tissue from this organism is photosynthetic and contains some thylakoids, although the photosynthetic activity does not exceed the light compensation point.</text>
</comment>
<keyword id="KW-0934">Plastid</keyword>
<organism>
    <name type="scientific">Cuscuta reflexa</name>
    <name type="common">Southern Asian dodder</name>
    <dbReference type="NCBI Taxonomy" id="4129"/>
    <lineage>
        <taxon>Eukaryota</taxon>
        <taxon>Viridiplantae</taxon>
        <taxon>Streptophyta</taxon>
        <taxon>Embryophyta</taxon>
        <taxon>Tracheophyta</taxon>
        <taxon>Spermatophyta</taxon>
        <taxon>Magnoliopsida</taxon>
        <taxon>eudicotyledons</taxon>
        <taxon>Gunneridae</taxon>
        <taxon>Pentapetalae</taxon>
        <taxon>asterids</taxon>
        <taxon>lamiids</taxon>
        <taxon>Solanales</taxon>
        <taxon>Convolvulaceae</taxon>
        <taxon>Cuscuteae</taxon>
        <taxon>Cuscuta</taxon>
        <taxon>Cuscuta subgen. Monogynella</taxon>
    </lineage>
</organism>
<accession>P32034</accession>
<feature type="chain" id="PRO_0000217309" description="Putative uncharacterized protein ycf15">
    <location>
        <begin position="1"/>
        <end position="77"/>
    </location>
</feature>
<dbReference type="EMBL" id="X67512">
    <property type="protein sequence ID" value="CAA47849.1"/>
    <property type="molecule type" value="Genomic_DNA"/>
</dbReference>
<dbReference type="EMBL" id="AM711640">
    <property type="status" value="NOT_ANNOTATED_CDS"/>
    <property type="molecule type" value="Genomic_DNA"/>
</dbReference>
<dbReference type="PIR" id="S33914">
    <property type="entry name" value="S33914"/>
</dbReference>
<dbReference type="GO" id="GO:0009536">
    <property type="term" value="C:plastid"/>
    <property type="evidence" value="ECO:0007669"/>
    <property type="project" value="UniProtKB-SubCell"/>
</dbReference>
<dbReference type="InterPro" id="IPR019645">
    <property type="entry name" value="Uncharacterised_Ycf15"/>
</dbReference>
<dbReference type="Pfam" id="PF10705">
    <property type="entry name" value="Ycf15"/>
    <property type="match status" value="1"/>
</dbReference>
<geneLocation type="plastid"/>
<evidence type="ECO:0000305" key="1"/>
<gene>
    <name type="primary">ycf15</name>
</gene>
<protein>
    <recommendedName>
        <fullName>Putative uncharacterized protein ycf15</fullName>
    </recommendedName>
    <alternativeName>
        <fullName>ORF77</fullName>
    </alternativeName>
</protein>